<dbReference type="EMBL" id="AF078851">
    <property type="protein sequence ID" value="AAD44483.1"/>
    <property type="molecule type" value="mRNA"/>
</dbReference>
<dbReference type="EMBL" id="AF453583">
    <property type="protein sequence ID" value="AAL67431.1"/>
    <property type="molecule type" value="mRNA"/>
</dbReference>
<dbReference type="EMBL" id="AY359093">
    <property type="protein sequence ID" value="AAQ89451.1"/>
    <property type="molecule type" value="mRNA"/>
</dbReference>
<dbReference type="EMBL" id="AK075314">
    <property type="protein sequence ID" value="BAG52108.1"/>
    <property type="molecule type" value="mRNA"/>
</dbReference>
<dbReference type="EMBL" id="AK290175">
    <property type="protein sequence ID" value="BAF82864.1"/>
    <property type="molecule type" value="mRNA"/>
</dbReference>
<dbReference type="EMBL" id="AK296466">
    <property type="protein sequence ID" value="BAG59111.1"/>
    <property type="molecule type" value="mRNA"/>
</dbReference>
<dbReference type="EMBL" id="AC020892">
    <property type="status" value="NOT_ANNOTATED_CDS"/>
    <property type="molecule type" value="Genomic_DNA"/>
</dbReference>
<dbReference type="EMBL" id="CH471082">
    <property type="protein sequence ID" value="EAW77426.1"/>
    <property type="molecule type" value="Genomic_DNA"/>
</dbReference>
<dbReference type="EMBL" id="BC009511">
    <property type="protein sequence ID" value="AAH09511.2"/>
    <property type="molecule type" value="mRNA"/>
</dbReference>
<dbReference type="EMBL" id="BC014539">
    <property type="protein sequence ID" value="AAH14539.1"/>
    <property type="molecule type" value="mRNA"/>
</dbReference>
<dbReference type="CCDS" id="CCDS10142.1">
    <molecule id="Q8WXD2-1"/>
</dbReference>
<dbReference type="CCDS" id="CCDS53947.1">
    <molecule id="Q8WXD2-2"/>
</dbReference>
<dbReference type="RefSeq" id="NP_001158729.1">
    <molecule id="Q8WXD2-2"/>
    <property type="nucleotide sequence ID" value="NM_001165257.2"/>
</dbReference>
<dbReference type="RefSeq" id="NP_037375.2">
    <molecule id="Q8WXD2-1"/>
    <property type="nucleotide sequence ID" value="NM_013243.3"/>
</dbReference>
<dbReference type="SMR" id="Q8WXD2"/>
<dbReference type="BioGRID" id="118874">
    <property type="interactions" value="18"/>
</dbReference>
<dbReference type="DIP" id="DIP-29451N"/>
<dbReference type="FunCoup" id="Q8WXD2">
    <property type="interactions" value="119"/>
</dbReference>
<dbReference type="IntAct" id="Q8WXD2">
    <property type="interactions" value="11"/>
</dbReference>
<dbReference type="STRING" id="9606.ENSP00000220478"/>
<dbReference type="GlyConnect" id="732">
    <property type="glycosylation" value="13 N-Linked glycans (1 site), 1 O-Linked glycan (3 sites)"/>
</dbReference>
<dbReference type="GlyCosmos" id="Q8WXD2">
    <property type="glycosylation" value="5 sites, 16 glycans"/>
</dbReference>
<dbReference type="GlyGen" id="Q8WXD2">
    <property type="glycosylation" value="8 sites, 18 N-linked glycans (2 sites), 3 O-linked glycans (5 sites)"/>
</dbReference>
<dbReference type="iPTMnet" id="Q8WXD2"/>
<dbReference type="PhosphoSitePlus" id="Q8WXD2"/>
<dbReference type="BioMuta" id="SCG3"/>
<dbReference type="DMDM" id="46397796"/>
<dbReference type="jPOST" id="Q8WXD2"/>
<dbReference type="MassIVE" id="Q8WXD2"/>
<dbReference type="PaxDb" id="9606-ENSP00000220478"/>
<dbReference type="PeptideAtlas" id="Q8WXD2"/>
<dbReference type="ProteomicsDB" id="75012">
    <molecule id="Q8WXD2-1"/>
</dbReference>
<dbReference type="ProteomicsDB" id="75013">
    <molecule id="Q8WXD2-2"/>
</dbReference>
<dbReference type="Antibodypedia" id="1520">
    <property type="antibodies" value="270 antibodies from 31 providers"/>
</dbReference>
<dbReference type="DNASU" id="29106"/>
<dbReference type="Ensembl" id="ENST00000220478.8">
    <molecule id="Q8WXD2-1"/>
    <property type="protein sequence ID" value="ENSP00000220478.3"/>
    <property type="gene ID" value="ENSG00000104112.9"/>
</dbReference>
<dbReference type="Ensembl" id="ENST00000542355.6">
    <molecule id="Q8WXD2-2"/>
    <property type="protein sequence ID" value="ENSP00000445205.2"/>
    <property type="gene ID" value="ENSG00000104112.9"/>
</dbReference>
<dbReference type="GeneID" id="29106"/>
<dbReference type="KEGG" id="hsa:29106"/>
<dbReference type="MANE-Select" id="ENST00000220478.8">
    <property type="protein sequence ID" value="ENSP00000220478.3"/>
    <property type="RefSeq nucleotide sequence ID" value="NM_013243.4"/>
    <property type="RefSeq protein sequence ID" value="NP_037375.2"/>
</dbReference>
<dbReference type="UCSC" id="uc002abh.4">
    <molecule id="Q8WXD2-1"/>
    <property type="organism name" value="human"/>
</dbReference>
<dbReference type="AGR" id="HGNC:13707"/>
<dbReference type="CTD" id="29106"/>
<dbReference type="DisGeNET" id="29106"/>
<dbReference type="GeneCards" id="SCG3"/>
<dbReference type="HGNC" id="HGNC:13707">
    <property type="gene designation" value="SCG3"/>
</dbReference>
<dbReference type="HPA" id="ENSG00000104112">
    <property type="expression patterns" value="Tissue enhanced (brain, pituitary gland, retina)"/>
</dbReference>
<dbReference type="MIM" id="611796">
    <property type="type" value="gene"/>
</dbReference>
<dbReference type="neXtProt" id="NX_Q8WXD2"/>
<dbReference type="OpenTargets" id="ENSG00000104112"/>
<dbReference type="PharmGKB" id="PA34988"/>
<dbReference type="VEuPathDB" id="HostDB:ENSG00000104112"/>
<dbReference type="eggNOG" id="ENOG502QUJH">
    <property type="taxonomic scope" value="Eukaryota"/>
</dbReference>
<dbReference type="GeneTree" id="ENSGT00390000005488"/>
<dbReference type="HOGENOM" id="CLU_031198_1_0_1"/>
<dbReference type="InParanoid" id="Q8WXD2"/>
<dbReference type="OMA" id="TDKAIHN"/>
<dbReference type="OrthoDB" id="9941750at2759"/>
<dbReference type="PAN-GO" id="Q8WXD2">
    <property type="GO annotations" value="2 GO annotations based on evolutionary models"/>
</dbReference>
<dbReference type="PhylomeDB" id="Q8WXD2"/>
<dbReference type="TreeFam" id="TF331266"/>
<dbReference type="PathwayCommons" id="Q8WXD2"/>
<dbReference type="Reactome" id="R-HSA-114608">
    <property type="pathway name" value="Platelet degranulation"/>
</dbReference>
<dbReference type="Reactome" id="R-HSA-381426">
    <property type="pathway name" value="Regulation of Insulin-like Growth Factor (IGF) transport and uptake by Insulin-like Growth Factor Binding Proteins (IGFBPs)"/>
</dbReference>
<dbReference type="Reactome" id="R-HSA-8957275">
    <property type="pathway name" value="Post-translational protein phosphorylation"/>
</dbReference>
<dbReference type="SignaLink" id="Q8WXD2"/>
<dbReference type="BioGRID-ORCS" id="29106">
    <property type="hits" value="14 hits in 1153 CRISPR screens"/>
</dbReference>
<dbReference type="ChiTaRS" id="SCG3">
    <property type="organism name" value="human"/>
</dbReference>
<dbReference type="GeneWiki" id="SCG3"/>
<dbReference type="GenomeRNAi" id="29106"/>
<dbReference type="Pharos" id="Q8WXD2">
    <property type="development level" value="Tbio"/>
</dbReference>
<dbReference type="PRO" id="PR:Q8WXD2"/>
<dbReference type="Proteomes" id="UP000005640">
    <property type="component" value="Chromosome 15"/>
</dbReference>
<dbReference type="RNAct" id="Q8WXD2">
    <property type="molecule type" value="protein"/>
</dbReference>
<dbReference type="Bgee" id="ENSG00000104112">
    <property type="expression patterns" value="Expressed in islet of Langerhans and 119 other cell types or tissues"/>
</dbReference>
<dbReference type="ExpressionAtlas" id="Q8WXD2">
    <property type="expression patterns" value="baseline and differential"/>
</dbReference>
<dbReference type="GO" id="GO:0005788">
    <property type="term" value="C:endoplasmic reticulum lumen"/>
    <property type="evidence" value="ECO:0000304"/>
    <property type="project" value="Reactome"/>
</dbReference>
<dbReference type="GO" id="GO:0005576">
    <property type="term" value="C:extracellular region"/>
    <property type="evidence" value="ECO:0000304"/>
    <property type="project" value="Reactome"/>
</dbReference>
<dbReference type="GO" id="GO:0034774">
    <property type="term" value="C:secretory granule lumen"/>
    <property type="evidence" value="ECO:0000304"/>
    <property type="project" value="Reactome"/>
</dbReference>
<dbReference type="GO" id="GO:0030667">
    <property type="term" value="C:secretory granule membrane"/>
    <property type="evidence" value="ECO:0000318"/>
    <property type="project" value="GO_Central"/>
</dbReference>
<dbReference type="GO" id="GO:0030658">
    <property type="term" value="C:transport vesicle membrane"/>
    <property type="evidence" value="ECO:0007669"/>
    <property type="project" value="UniProtKB-SubCell"/>
</dbReference>
<dbReference type="GO" id="GO:0003723">
    <property type="term" value="F:RNA binding"/>
    <property type="evidence" value="ECO:0007005"/>
    <property type="project" value="UniProtKB"/>
</dbReference>
<dbReference type="GO" id="GO:0033366">
    <property type="term" value="P:protein localization to secretory granule"/>
    <property type="evidence" value="ECO:0000318"/>
    <property type="project" value="GO_Central"/>
</dbReference>
<dbReference type="InterPro" id="IPR026197">
    <property type="entry name" value="SCG3"/>
</dbReference>
<dbReference type="PANTHER" id="PTHR17388">
    <property type="entry name" value="SECRETOGRANIN III"/>
    <property type="match status" value="1"/>
</dbReference>
<dbReference type="PANTHER" id="PTHR17388:SF2">
    <property type="entry name" value="SECRETOGRANIN-3"/>
    <property type="match status" value="1"/>
</dbReference>
<dbReference type="Pfam" id="PF15467">
    <property type="entry name" value="SGIII"/>
    <property type="match status" value="1"/>
</dbReference>
<name>SCG3_HUMAN</name>
<organism>
    <name type="scientific">Homo sapiens</name>
    <name type="common">Human</name>
    <dbReference type="NCBI Taxonomy" id="9606"/>
    <lineage>
        <taxon>Eukaryota</taxon>
        <taxon>Metazoa</taxon>
        <taxon>Chordata</taxon>
        <taxon>Craniata</taxon>
        <taxon>Vertebrata</taxon>
        <taxon>Euteleostomi</taxon>
        <taxon>Mammalia</taxon>
        <taxon>Eutheria</taxon>
        <taxon>Euarchontoglires</taxon>
        <taxon>Primates</taxon>
        <taxon>Haplorrhini</taxon>
        <taxon>Catarrhini</taxon>
        <taxon>Hominidae</taxon>
        <taxon>Homo</taxon>
    </lineage>
</organism>
<keyword id="KW-0025">Alternative splicing</keyword>
<keyword id="KW-0165">Cleavage on pair of basic residues</keyword>
<keyword id="KW-0968">Cytoplasmic vesicle</keyword>
<keyword id="KW-0325">Glycoprotein</keyword>
<keyword id="KW-0472">Membrane</keyword>
<keyword id="KW-0597">Phosphoprotein</keyword>
<keyword id="KW-0654">Proteoglycan</keyword>
<keyword id="KW-1267">Proteomics identification</keyword>
<keyword id="KW-1185">Reference proteome</keyword>
<keyword id="KW-0964">Secreted</keyword>
<keyword id="KW-0732">Signal</keyword>
<feature type="signal peptide" evidence="4">
    <location>
        <begin position="1"/>
        <end position="19"/>
    </location>
</feature>
<feature type="chain" id="PRO_0000005461" description="Secretogranin-3">
    <location>
        <begin position="20"/>
        <end position="468"/>
    </location>
</feature>
<feature type="region of interest" description="Disordered" evidence="5">
    <location>
        <begin position="23"/>
        <end position="69"/>
    </location>
</feature>
<feature type="region of interest" description="Disordered" evidence="5">
    <location>
        <begin position="353"/>
        <end position="406"/>
    </location>
</feature>
<feature type="compositionally biased region" description="Basic and acidic residues" evidence="5">
    <location>
        <begin position="29"/>
        <end position="42"/>
    </location>
</feature>
<feature type="compositionally biased region" description="Basic and acidic residues" evidence="5">
    <location>
        <begin position="360"/>
        <end position="406"/>
    </location>
</feature>
<feature type="modified residue" description="Phosphoserine" evidence="2">
    <location>
        <position position="37"/>
    </location>
</feature>
<feature type="modified residue" description="Phosphoserine" evidence="2">
    <location>
        <position position="362"/>
    </location>
</feature>
<feature type="glycosylation site" description="O-linked (Xyl...) (chondroitin sulfate) serine" evidence="10">
    <location>
        <position position="37"/>
    </location>
</feature>
<feature type="glycosylation site" description="O-linked (GalNAc...) threonine" evidence="9">
    <location>
        <position position="216"/>
    </location>
</feature>
<feature type="glycosylation site" description="O-linked (GalNAc...) threonine" evidence="9">
    <location>
        <position position="231"/>
    </location>
</feature>
<feature type="glycosylation site" description="O-linked (GalNAc...) serine" evidence="9">
    <location>
        <position position="359"/>
    </location>
</feature>
<feature type="splice variant" id="VSP_042876" description="In isoform 2." evidence="12">
    <location>
        <begin position="1"/>
        <end position="232"/>
    </location>
</feature>
<feature type="sequence variant" id="VAR_013827" description="In dbSNP:rs2305710.">
    <original>S</original>
    <variation>N</variation>
    <location>
        <position position="125"/>
    </location>
</feature>
<feature type="sequence variant" id="VAR_067273" description="In dbSNP:rs17851186." evidence="7">
    <original>V</original>
    <variation>A</variation>
    <location>
        <position position="167"/>
    </location>
</feature>
<feature type="sequence variant" id="VAR_034484" description="In dbSNP:rs35664837.">
    <original>M</original>
    <variation>V</variation>
    <location>
        <position position="233"/>
    </location>
</feature>
<feature type="sequence conflict" description="In Ref. 1; AAD44483." evidence="13" ref="1">
    <original>K</original>
    <variation>R</variation>
    <location>
        <position position="79"/>
    </location>
</feature>
<feature type="sequence conflict" description="In Ref. 4; BAG52108." evidence="13" ref="4">
    <original>D</original>
    <variation>G</variation>
    <location>
        <position position="150"/>
    </location>
</feature>
<feature type="sequence conflict" description="In Ref. 1; AAD44483." evidence="13" ref="1">
    <original>EEL</original>
    <variation>RDF</variation>
    <location>
        <begin position="272"/>
        <end position="274"/>
    </location>
</feature>
<feature type="sequence conflict" description="In Ref. 4; BAG59111." evidence="13" ref="4">
    <original>K</original>
    <variation>R</variation>
    <location>
        <position position="421"/>
    </location>
</feature>
<sequence>MGFLGTGTWILVLVLPIQAFPKPGGSQDKSLHNRELSAERPLNEQIAEAEEDKIKKTYPPENKPGQSNYSFVDNLNLLKAITEKEKIEKERQSIRSSPLDNKLNVEDVDSTKNRKLIDDYDSTKSGLDHKFQDDPDGLHQLDGTPLTAEDIVHKIAARIYEENDRAVFDKIVSKLLNLGLITESQAHTLEDEVAEVLQKLISKEANNYEEDPNKPTSWTENQAGKIPEKVTPMAAIQDGLAKGENDETVSNTLTLTNGLERRTKTYSEDNFEELQYFPNFYALLKSIDSEKEAKEKETLITIMKTLIDFVKMMVKYGTISPEEGVSYLENLDEMIALQTKNKLEKNATDNISKLFPAPSEKSHEETDSTKEEAAKMEKEYGSLKDSTKDDNSNPGGKTDEPKGKTEAYLEAIRKNIEWLKKHDKKGNKEDYDLSKMRDFINKQADAYVEKGILDKEEAEAIKRIYSSL</sequence>
<accession>Q8WXD2</accession>
<accession>A8K2B0</accession>
<accession>B3KQP6</accession>
<accession>B4DK99</accession>
<accession>F5H3R8</accession>
<accession>Q96C83</accession>
<accession>Q96GE8</accession>
<accession>Q9Y6G7</accession>
<comment type="function">
    <text evidence="3 8 11">Member of the granin protein family that regulates the biogenesis of secretory granules (PubMed:19357184). Acts as a sorting receptor for intragranular proteins including chromogranin A/CHGA (By similarity). May also play a role in angiogenesis. Promotes endothelial proliferation, migration and tube formation through MEK/ERK signaling pathway (PubMed:29154827).</text>
</comment>
<comment type="subunit">
    <text evidence="2 8">Interacts with CHGA (By similarity) (PubMed:19357184). Interacts with secretogranin II/SCG2 (PubMed:19357184). Interacts (via C-terminus) with CPE (By similarity).</text>
</comment>
<comment type="interaction">
    <interactant intactId="EBI-12162999">
        <id>Q8WXD2</id>
    </interactant>
    <interactant intactId="EBI-947132">
        <id>P13521</id>
        <label>SCG2</label>
    </interactant>
    <organismsDiffer>false</organismsDiffer>
    <experiments>2</experiments>
</comment>
<comment type="interaction">
    <interactant intactId="EBI-12162999">
        <id>Q8WXD2</id>
    </interactant>
    <interactant intactId="EBI-727004">
        <id>O00560</id>
        <label>SDCBP</label>
    </interactant>
    <organismsDiffer>false</organismsDiffer>
    <experiments>3</experiments>
</comment>
<comment type="subcellular location">
    <subcellularLocation>
        <location evidence="3">Cytoplasmic vesicle</location>
        <location evidence="3">Secretory vesicle</location>
    </subcellularLocation>
    <subcellularLocation>
        <location evidence="3">Cytoplasmic vesicle</location>
        <location evidence="3">Secretory vesicle membrane</location>
        <topology evidence="1">Peripheral membrane protein</topology>
    </subcellularLocation>
    <subcellularLocation>
        <location evidence="6 10">Secreted</location>
    </subcellularLocation>
    <text evidence="3">Associated with the secretory granule membrane through direct binding to cholesterol-enriched lipid rafts.</text>
</comment>
<comment type="alternative products">
    <event type="alternative splicing"/>
    <isoform>
        <id>Q8WXD2-1</id>
        <name>1</name>
        <sequence type="displayed"/>
    </isoform>
    <isoform>
        <id>Q8WXD2-2</id>
        <name>2</name>
        <sequence type="described" ref="VSP_042876"/>
    </isoform>
</comment>
<comment type="tissue specificity">
    <text evidence="6 10">Detected in urine (at protein level) (PubMed:25326458). Expressed in brain, heart, kidney, liver and skeletal muscle.</text>
</comment>
<comment type="PTM">
    <text evidence="9 10">O-glycosylated.</text>
</comment>
<comment type="polymorphism">
    <text>Polymorphisms in the 5'-flanking region and in intron 1 may have an effect on transcriptional activity and be associated with an increase in subcutaneous, but not visceral, fat area. Hence, may influence the risk of obesity.</text>
</comment>
<gene>
    <name type="primary">SCG3</name>
    <name type="ORF">UNQ2502/PRO5990</name>
</gene>
<reference key="1">
    <citation type="submission" date="1998-07" db="EMBL/GenBank/DDBJ databases">
        <title>Human secretogranin III mRNA, complete cds.</title>
        <authorList>
            <person name="Song H."/>
            <person name="Peng Y."/>
            <person name="Huang Q."/>
            <person name="Dai M."/>
            <person name="Mao Y."/>
            <person name="Zhang Q."/>
            <person name="Mao M."/>
            <person name="Fu G."/>
            <person name="Luo M."/>
            <person name="Chen J."/>
            <person name="Hu R."/>
        </authorList>
    </citation>
    <scope>NUCLEOTIDE SEQUENCE [MRNA] (ISOFORM 1)</scope>
    <source>
        <tissue>Pituitary</tissue>
    </source>
</reference>
<reference key="2">
    <citation type="journal article" date="2002" name="Sheng Wu Hua Xue Yu Sheng Wu Wu Li Xue Bao">
        <title>Cloning and characterization of a novel human secretory protein: secretogranin III.</title>
        <authorList>
            <person name="Rong Y.P."/>
            <person name="Liu F."/>
            <person name="Zeng L.C."/>
            <person name="Ma W.J."/>
            <person name="Wei D.Z."/>
            <person name="Han Z.G."/>
        </authorList>
    </citation>
    <scope>NUCLEOTIDE SEQUENCE [MRNA] (ISOFORM 1)</scope>
    <scope>TISSUE SPECIFICITY</scope>
    <scope>SUBCELLULAR LOCATION</scope>
</reference>
<reference key="3">
    <citation type="journal article" date="2003" name="Genome Res.">
        <title>The secreted protein discovery initiative (SPDI), a large-scale effort to identify novel human secreted and transmembrane proteins: a bioinformatics assessment.</title>
        <authorList>
            <person name="Clark H.F."/>
            <person name="Gurney A.L."/>
            <person name="Abaya E."/>
            <person name="Baker K."/>
            <person name="Baldwin D.T."/>
            <person name="Brush J."/>
            <person name="Chen J."/>
            <person name="Chow B."/>
            <person name="Chui C."/>
            <person name="Crowley C."/>
            <person name="Currell B."/>
            <person name="Deuel B."/>
            <person name="Dowd P."/>
            <person name="Eaton D."/>
            <person name="Foster J.S."/>
            <person name="Grimaldi C."/>
            <person name="Gu Q."/>
            <person name="Hass P.E."/>
            <person name="Heldens S."/>
            <person name="Huang A."/>
            <person name="Kim H.S."/>
            <person name="Klimowski L."/>
            <person name="Jin Y."/>
            <person name="Johnson S."/>
            <person name="Lee J."/>
            <person name="Lewis L."/>
            <person name="Liao D."/>
            <person name="Mark M.R."/>
            <person name="Robbie E."/>
            <person name="Sanchez C."/>
            <person name="Schoenfeld J."/>
            <person name="Seshagiri S."/>
            <person name="Simmons L."/>
            <person name="Singh J."/>
            <person name="Smith V."/>
            <person name="Stinson J."/>
            <person name="Vagts A."/>
            <person name="Vandlen R.L."/>
            <person name="Watanabe C."/>
            <person name="Wieand D."/>
            <person name="Woods K."/>
            <person name="Xie M.-H."/>
            <person name="Yansura D.G."/>
            <person name="Yi S."/>
            <person name="Yu G."/>
            <person name="Yuan J."/>
            <person name="Zhang M."/>
            <person name="Zhang Z."/>
            <person name="Goddard A.D."/>
            <person name="Wood W.I."/>
            <person name="Godowski P.J."/>
            <person name="Gray A.M."/>
        </authorList>
    </citation>
    <scope>NUCLEOTIDE SEQUENCE [LARGE SCALE MRNA] (ISOFORM 1)</scope>
</reference>
<reference key="4">
    <citation type="journal article" date="2004" name="Nat. Genet.">
        <title>Complete sequencing and characterization of 21,243 full-length human cDNAs.</title>
        <authorList>
            <person name="Ota T."/>
            <person name="Suzuki Y."/>
            <person name="Nishikawa T."/>
            <person name="Otsuki T."/>
            <person name="Sugiyama T."/>
            <person name="Irie R."/>
            <person name="Wakamatsu A."/>
            <person name="Hayashi K."/>
            <person name="Sato H."/>
            <person name="Nagai K."/>
            <person name="Kimura K."/>
            <person name="Makita H."/>
            <person name="Sekine M."/>
            <person name="Obayashi M."/>
            <person name="Nishi T."/>
            <person name="Shibahara T."/>
            <person name="Tanaka T."/>
            <person name="Ishii S."/>
            <person name="Yamamoto J."/>
            <person name="Saito K."/>
            <person name="Kawai Y."/>
            <person name="Isono Y."/>
            <person name="Nakamura Y."/>
            <person name="Nagahari K."/>
            <person name="Murakami K."/>
            <person name="Yasuda T."/>
            <person name="Iwayanagi T."/>
            <person name="Wagatsuma M."/>
            <person name="Shiratori A."/>
            <person name="Sudo H."/>
            <person name="Hosoiri T."/>
            <person name="Kaku Y."/>
            <person name="Kodaira H."/>
            <person name="Kondo H."/>
            <person name="Sugawara M."/>
            <person name="Takahashi M."/>
            <person name="Kanda K."/>
            <person name="Yokoi T."/>
            <person name="Furuya T."/>
            <person name="Kikkawa E."/>
            <person name="Omura Y."/>
            <person name="Abe K."/>
            <person name="Kamihara K."/>
            <person name="Katsuta N."/>
            <person name="Sato K."/>
            <person name="Tanikawa M."/>
            <person name="Yamazaki M."/>
            <person name="Ninomiya K."/>
            <person name="Ishibashi T."/>
            <person name="Yamashita H."/>
            <person name="Murakawa K."/>
            <person name="Fujimori K."/>
            <person name="Tanai H."/>
            <person name="Kimata M."/>
            <person name="Watanabe M."/>
            <person name="Hiraoka S."/>
            <person name="Chiba Y."/>
            <person name="Ishida S."/>
            <person name="Ono Y."/>
            <person name="Takiguchi S."/>
            <person name="Watanabe S."/>
            <person name="Yosida M."/>
            <person name="Hotuta T."/>
            <person name="Kusano J."/>
            <person name="Kanehori K."/>
            <person name="Takahashi-Fujii A."/>
            <person name="Hara H."/>
            <person name="Tanase T.-O."/>
            <person name="Nomura Y."/>
            <person name="Togiya S."/>
            <person name="Komai F."/>
            <person name="Hara R."/>
            <person name="Takeuchi K."/>
            <person name="Arita M."/>
            <person name="Imose N."/>
            <person name="Musashino K."/>
            <person name="Yuuki H."/>
            <person name="Oshima A."/>
            <person name="Sasaki N."/>
            <person name="Aotsuka S."/>
            <person name="Yoshikawa Y."/>
            <person name="Matsunawa H."/>
            <person name="Ichihara T."/>
            <person name="Shiohata N."/>
            <person name="Sano S."/>
            <person name="Moriya S."/>
            <person name="Momiyama H."/>
            <person name="Satoh N."/>
            <person name="Takami S."/>
            <person name="Terashima Y."/>
            <person name="Suzuki O."/>
            <person name="Nakagawa S."/>
            <person name="Senoh A."/>
            <person name="Mizoguchi H."/>
            <person name="Goto Y."/>
            <person name="Shimizu F."/>
            <person name="Wakebe H."/>
            <person name="Hishigaki H."/>
            <person name="Watanabe T."/>
            <person name="Sugiyama A."/>
            <person name="Takemoto M."/>
            <person name="Kawakami B."/>
            <person name="Yamazaki M."/>
            <person name="Watanabe K."/>
            <person name="Kumagai A."/>
            <person name="Itakura S."/>
            <person name="Fukuzumi Y."/>
            <person name="Fujimori Y."/>
            <person name="Komiyama M."/>
            <person name="Tashiro H."/>
            <person name="Tanigami A."/>
            <person name="Fujiwara T."/>
            <person name="Ono T."/>
            <person name="Yamada K."/>
            <person name="Fujii Y."/>
            <person name="Ozaki K."/>
            <person name="Hirao M."/>
            <person name="Ohmori Y."/>
            <person name="Kawabata A."/>
            <person name="Hikiji T."/>
            <person name="Kobatake N."/>
            <person name="Inagaki H."/>
            <person name="Ikema Y."/>
            <person name="Okamoto S."/>
            <person name="Okitani R."/>
            <person name="Kawakami T."/>
            <person name="Noguchi S."/>
            <person name="Itoh T."/>
            <person name="Shigeta K."/>
            <person name="Senba T."/>
            <person name="Matsumura K."/>
            <person name="Nakajima Y."/>
            <person name="Mizuno T."/>
            <person name="Morinaga M."/>
            <person name="Sasaki M."/>
            <person name="Togashi T."/>
            <person name="Oyama M."/>
            <person name="Hata H."/>
            <person name="Watanabe M."/>
            <person name="Komatsu T."/>
            <person name="Mizushima-Sugano J."/>
            <person name="Satoh T."/>
            <person name="Shirai Y."/>
            <person name="Takahashi Y."/>
            <person name="Nakagawa K."/>
            <person name="Okumura K."/>
            <person name="Nagase T."/>
            <person name="Nomura N."/>
            <person name="Kikuchi H."/>
            <person name="Masuho Y."/>
            <person name="Yamashita R."/>
            <person name="Nakai K."/>
            <person name="Yada T."/>
            <person name="Nakamura Y."/>
            <person name="Ohara O."/>
            <person name="Isogai T."/>
            <person name="Sugano S."/>
        </authorList>
    </citation>
    <scope>NUCLEOTIDE SEQUENCE [LARGE SCALE MRNA] (ISOFORMS 1 AND 2)</scope>
    <source>
        <tissue>Retinoblastoma</tissue>
        <tissue>Thalamus</tissue>
    </source>
</reference>
<reference key="5">
    <citation type="journal article" date="2006" name="Nature">
        <title>Analysis of the DNA sequence and duplication history of human chromosome 15.</title>
        <authorList>
            <person name="Zody M.C."/>
            <person name="Garber M."/>
            <person name="Sharpe T."/>
            <person name="Young S.K."/>
            <person name="Rowen L."/>
            <person name="O'Neill K."/>
            <person name="Whittaker C.A."/>
            <person name="Kamal M."/>
            <person name="Chang J.L."/>
            <person name="Cuomo C.A."/>
            <person name="Dewar K."/>
            <person name="FitzGerald M.G."/>
            <person name="Kodira C.D."/>
            <person name="Madan A."/>
            <person name="Qin S."/>
            <person name="Yang X."/>
            <person name="Abbasi N."/>
            <person name="Abouelleil A."/>
            <person name="Arachchi H.M."/>
            <person name="Baradarani L."/>
            <person name="Birditt B."/>
            <person name="Bloom S."/>
            <person name="Bloom T."/>
            <person name="Borowsky M.L."/>
            <person name="Burke J."/>
            <person name="Butler J."/>
            <person name="Cook A."/>
            <person name="DeArellano K."/>
            <person name="DeCaprio D."/>
            <person name="Dorris L. III"/>
            <person name="Dors M."/>
            <person name="Eichler E.E."/>
            <person name="Engels R."/>
            <person name="Fahey J."/>
            <person name="Fleetwood P."/>
            <person name="Friedman C."/>
            <person name="Gearin G."/>
            <person name="Hall J.L."/>
            <person name="Hensley G."/>
            <person name="Johnson E."/>
            <person name="Jones C."/>
            <person name="Kamat A."/>
            <person name="Kaur A."/>
            <person name="Locke D.P."/>
            <person name="Madan A."/>
            <person name="Munson G."/>
            <person name="Jaffe D.B."/>
            <person name="Lui A."/>
            <person name="Macdonald P."/>
            <person name="Mauceli E."/>
            <person name="Naylor J.W."/>
            <person name="Nesbitt R."/>
            <person name="Nicol R."/>
            <person name="O'Leary S.B."/>
            <person name="Ratcliffe A."/>
            <person name="Rounsley S."/>
            <person name="She X."/>
            <person name="Sneddon K.M.B."/>
            <person name="Stewart S."/>
            <person name="Sougnez C."/>
            <person name="Stone S.M."/>
            <person name="Topham K."/>
            <person name="Vincent D."/>
            <person name="Wang S."/>
            <person name="Zimmer A.R."/>
            <person name="Birren B.W."/>
            <person name="Hood L."/>
            <person name="Lander E.S."/>
            <person name="Nusbaum C."/>
        </authorList>
    </citation>
    <scope>NUCLEOTIDE SEQUENCE [LARGE SCALE GENOMIC DNA]</scope>
</reference>
<reference key="6">
    <citation type="submission" date="2005-07" db="EMBL/GenBank/DDBJ databases">
        <authorList>
            <person name="Mural R.J."/>
            <person name="Istrail S."/>
            <person name="Sutton G.G."/>
            <person name="Florea L."/>
            <person name="Halpern A.L."/>
            <person name="Mobarry C.M."/>
            <person name="Lippert R."/>
            <person name="Walenz B."/>
            <person name="Shatkay H."/>
            <person name="Dew I."/>
            <person name="Miller J.R."/>
            <person name="Flanigan M.J."/>
            <person name="Edwards N.J."/>
            <person name="Bolanos R."/>
            <person name="Fasulo D."/>
            <person name="Halldorsson B.V."/>
            <person name="Hannenhalli S."/>
            <person name="Turner R."/>
            <person name="Yooseph S."/>
            <person name="Lu F."/>
            <person name="Nusskern D.R."/>
            <person name="Shue B.C."/>
            <person name="Zheng X.H."/>
            <person name="Zhong F."/>
            <person name="Delcher A.L."/>
            <person name="Huson D.H."/>
            <person name="Kravitz S.A."/>
            <person name="Mouchard L."/>
            <person name="Reinert K."/>
            <person name="Remington K.A."/>
            <person name="Clark A.G."/>
            <person name="Waterman M.S."/>
            <person name="Eichler E.E."/>
            <person name="Adams M.D."/>
            <person name="Hunkapiller M.W."/>
            <person name="Myers E.W."/>
            <person name="Venter J.C."/>
        </authorList>
    </citation>
    <scope>NUCLEOTIDE SEQUENCE [LARGE SCALE GENOMIC DNA]</scope>
</reference>
<reference key="7">
    <citation type="journal article" date="2004" name="Genome Res.">
        <title>The status, quality, and expansion of the NIH full-length cDNA project: the Mammalian Gene Collection (MGC).</title>
        <authorList>
            <consortium name="The MGC Project Team"/>
        </authorList>
    </citation>
    <scope>NUCLEOTIDE SEQUENCE [LARGE SCALE MRNA] (ISOFORM 1)</scope>
    <scope>VARIANT ALA-167</scope>
    <source>
        <tissue>Brain</tissue>
        <tissue>Lung</tissue>
    </source>
</reference>
<reference key="8">
    <citation type="journal article" date="2007" name="J. Clin. Endocrinol. Metab.">
        <title>Functional single-nucleotide polymorphisms in the secretogranin III (SCG3) gene that form secretory granules with appetite-related neuropeptides are associated with obesity.</title>
        <authorList>
            <person name="Tanabe A."/>
            <person name="Yanagiya T."/>
            <person name="Iida A."/>
            <person name="Saito S."/>
            <person name="Sekine A."/>
            <person name="Takahashi A."/>
            <person name="Nakamura T."/>
            <person name="Tsunoda T."/>
            <person name="Kamohara S."/>
            <person name="Nakata Y."/>
            <person name="Kotani K."/>
            <person name="Komatsu R."/>
            <person name="Itoh N."/>
            <person name="Mineo I."/>
            <person name="Wada J."/>
            <person name="Funahashi T."/>
            <person name="Miyazaki S."/>
            <person name="Tokunaga K."/>
            <person name="Hamaguchi K."/>
            <person name="Shimada T."/>
            <person name="Tanaka K."/>
            <person name="Yamada K."/>
            <person name="Hanafusa T."/>
            <person name="Oikawa S."/>
            <person name="Yoshimatsu H."/>
            <person name="Sakata T."/>
            <person name="Matsuzawa Y."/>
            <person name="Kamatani N."/>
            <person name="Nakamura Y."/>
            <person name="Hotta K."/>
        </authorList>
    </citation>
    <scope>POLYMORPHISM</scope>
</reference>
<reference key="9">
    <citation type="journal article" date="2009" name="J. Endocrinol.">
        <title>Secretogranin II binds to secretogranin III and forms secretory granules with orexin, neuropeptide Y, and POMC.</title>
        <authorList>
            <person name="Hotta K."/>
            <person name="Hosaka M."/>
            <person name="Tanabe A."/>
            <person name="Takeuchi T."/>
        </authorList>
    </citation>
    <scope>INTERACTION WITH SCG2</scope>
    <scope>FUNCTION</scope>
</reference>
<reference key="10">
    <citation type="journal article" date="2013" name="J. Proteome Res.">
        <title>LC-MS/MS characterization of O-glycosylation sites and glycan structures of human cerebrospinal fluid glycoproteins.</title>
        <authorList>
            <person name="Halim A."/>
            <person name="Ruetschi U."/>
            <person name="Larson G."/>
            <person name="Nilsson J."/>
        </authorList>
    </citation>
    <scope>GLYCOSYLATION AT THR-216; THR-231 AND SER-359</scope>
    <scope>IDENTIFICATION BY MASS SPECTROMETRY</scope>
</reference>
<reference key="11">
    <citation type="journal article" date="2015" name="Mol. Cell. Proteomics">
        <title>Identification of chondroitin sulfate linkage region glycopeptides reveals prohormones as a novel class of proteoglycans.</title>
        <authorList>
            <person name="Noborn F."/>
            <person name="Gomez Toledo A."/>
            <person name="Sihlbom C."/>
            <person name="Lengqvist J."/>
            <person name="Fries E."/>
            <person name="Kjellen L."/>
            <person name="Nilsson J."/>
            <person name="Larson G."/>
        </authorList>
    </citation>
    <scope>SUBCELLULAR LOCATION</scope>
    <scope>TISSUE SPECIFICITY</scope>
    <scope>GLYCOSYLATION AT SER-37</scope>
</reference>
<reference key="12">
    <citation type="journal article" date="2018" name="Biochem. Biophys. Res. Commun.">
        <title>Secretogranin III promotes angiogenesis through MEK/ERK signaling pathway.</title>
        <authorList>
            <person name="Tang F."/>
            <person name="Pacheco M.T.F."/>
            <person name="Chen P."/>
            <person name="Liang D."/>
            <person name="Li W."/>
        </authorList>
    </citation>
    <scope>FUNCTION</scope>
</reference>
<evidence type="ECO:0000250" key="1"/>
<evidence type="ECO:0000250" key="2">
    <source>
        <dbReference type="UniProtKB" id="P47867"/>
    </source>
</evidence>
<evidence type="ECO:0000250" key="3">
    <source>
        <dbReference type="UniProtKB" id="P47868"/>
    </source>
</evidence>
<evidence type="ECO:0000255" key="4"/>
<evidence type="ECO:0000256" key="5">
    <source>
        <dbReference type="SAM" id="MobiDB-lite"/>
    </source>
</evidence>
<evidence type="ECO:0000269" key="6">
    <source>
    </source>
</evidence>
<evidence type="ECO:0000269" key="7">
    <source>
    </source>
</evidence>
<evidence type="ECO:0000269" key="8">
    <source>
    </source>
</evidence>
<evidence type="ECO:0000269" key="9">
    <source>
    </source>
</evidence>
<evidence type="ECO:0000269" key="10">
    <source>
    </source>
</evidence>
<evidence type="ECO:0000269" key="11">
    <source>
    </source>
</evidence>
<evidence type="ECO:0000303" key="12">
    <source>
    </source>
</evidence>
<evidence type="ECO:0000305" key="13"/>
<protein>
    <recommendedName>
        <fullName>Secretogranin-3</fullName>
    </recommendedName>
    <alternativeName>
        <fullName>Secretogranin III</fullName>
        <shortName>SgIII</shortName>
    </alternativeName>
</protein>
<proteinExistence type="evidence at protein level"/>